<gene>
    <name evidence="1" type="primary">rpmG</name>
    <name type="ordered locus">RHOS4_04660</name>
    <name type="ORF">RSP_1887</name>
</gene>
<accession>Q3J5A0</accession>
<feature type="chain" id="PRO_0000356626" description="Large ribosomal subunit protein bL33">
    <location>
        <begin position="1"/>
        <end position="55"/>
    </location>
</feature>
<dbReference type="EMBL" id="CP000143">
    <property type="protein sequence ID" value="ABA78034.1"/>
    <property type="molecule type" value="Genomic_DNA"/>
</dbReference>
<dbReference type="RefSeq" id="WP_002722806.1">
    <property type="nucleotide sequence ID" value="NZ_CP030271.1"/>
</dbReference>
<dbReference type="RefSeq" id="YP_351935.1">
    <property type="nucleotide sequence ID" value="NC_007493.2"/>
</dbReference>
<dbReference type="SMR" id="Q3J5A0"/>
<dbReference type="STRING" id="272943.RSP_1887"/>
<dbReference type="EnsemblBacteria" id="ABA78034">
    <property type="protein sequence ID" value="ABA78034"/>
    <property type="gene ID" value="RSP_1887"/>
</dbReference>
<dbReference type="GeneID" id="67445676"/>
<dbReference type="KEGG" id="rsp:RSP_1887"/>
<dbReference type="PATRIC" id="fig|272943.9.peg.775"/>
<dbReference type="eggNOG" id="COG0267">
    <property type="taxonomic scope" value="Bacteria"/>
</dbReference>
<dbReference type="OrthoDB" id="21586at2"/>
<dbReference type="PhylomeDB" id="Q3J5A0"/>
<dbReference type="Proteomes" id="UP000002703">
    <property type="component" value="Chromosome 1"/>
</dbReference>
<dbReference type="GO" id="GO:0022625">
    <property type="term" value="C:cytosolic large ribosomal subunit"/>
    <property type="evidence" value="ECO:0007669"/>
    <property type="project" value="TreeGrafter"/>
</dbReference>
<dbReference type="GO" id="GO:0003735">
    <property type="term" value="F:structural constituent of ribosome"/>
    <property type="evidence" value="ECO:0007669"/>
    <property type="project" value="InterPro"/>
</dbReference>
<dbReference type="GO" id="GO:0006412">
    <property type="term" value="P:translation"/>
    <property type="evidence" value="ECO:0007669"/>
    <property type="project" value="UniProtKB-UniRule"/>
</dbReference>
<dbReference type="Gene3D" id="2.20.28.120">
    <property type="entry name" value="Ribosomal protein L33"/>
    <property type="match status" value="1"/>
</dbReference>
<dbReference type="HAMAP" id="MF_00294">
    <property type="entry name" value="Ribosomal_bL33"/>
    <property type="match status" value="1"/>
</dbReference>
<dbReference type="InterPro" id="IPR001705">
    <property type="entry name" value="Ribosomal_bL33"/>
</dbReference>
<dbReference type="InterPro" id="IPR018264">
    <property type="entry name" value="Ribosomal_bL33_CS"/>
</dbReference>
<dbReference type="InterPro" id="IPR038584">
    <property type="entry name" value="Ribosomal_bL33_sf"/>
</dbReference>
<dbReference type="InterPro" id="IPR011332">
    <property type="entry name" value="Ribosomal_zn-bd"/>
</dbReference>
<dbReference type="NCBIfam" id="NF001860">
    <property type="entry name" value="PRK00595.1"/>
    <property type="match status" value="1"/>
</dbReference>
<dbReference type="NCBIfam" id="TIGR01023">
    <property type="entry name" value="rpmG_bact"/>
    <property type="match status" value="1"/>
</dbReference>
<dbReference type="PANTHER" id="PTHR15238">
    <property type="entry name" value="54S RIBOSOMAL PROTEIN L39, MITOCHONDRIAL"/>
    <property type="match status" value="1"/>
</dbReference>
<dbReference type="PANTHER" id="PTHR15238:SF1">
    <property type="entry name" value="LARGE RIBOSOMAL SUBUNIT PROTEIN BL33M"/>
    <property type="match status" value="1"/>
</dbReference>
<dbReference type="Pfam" id="PF00471">
    <property type="entry name" value="Ribosomal_L33"/>
    <property type="match status" value="1"/>
</dbReference>
<dbReference type="SUPFAM" id="SSF57829">
    <property type="entry name" value="Zn-binding ribosomal proteins"/>
    <property type="match status" value="1"/>
</dbReference>
<dbReference type="PROSITE" id="PS00582">
    <property type="entry name" value="RIBOSOMAL_L33"/>
    <property type="match status" value="1"/>
</dbReference>
<organism>
    <name type="scientific">Cereibacter sphaeroides (strain ATCC 17023 / DSM 158 / JCM 6121 / CCUG 31486 / LMG 2827 / NBRC 12203 / NCIMB 8253 / ATH 2.4.1.)</name>
    <name type="common">Rhodobacter sphaeroides</name>
    <dbReference type="NCBI Taxonomy" id="272943"/>
    <lineage>
        <taxon>Bacteria</taxon>
        <taxon>Pseudomonadati</taxon>
        <taxon>Pseudomonadota</taxon>
        <taxon>Alphaproteobacteria</taxon>
        <taxon>Rhodobacterales</taxon>
        <taxon>Paracoccaceae</taxon>
        <taxon>Cereibacter</taxon>
    </lineage>
</organism>
<comment type="similarity">
    <text evidence="1">Belongs to the bacterial ribosomal protein bL33 family.</text>
</comment>
<name>RL33_CERS4</name>
<keyword id="KW-1185">Reference proteome</keyword>
<keyword id="KW-0687">Ribonucleoprotein</keyword>
<keyword id="KW-0689">Ribosomal protein</keyword>
<proteinExistence type="inferred from homology"/>
<protein>
    <recommendedName>
        <fullName evidence="1">Large ribosomal subunit protein bL33</fullName>
    </recommendedName>
    <alternativeName>
        <fullName evidence="2">50S ribosomal protein L33</fullName>
    </alternativeName>
</protein>
<reference key="1">
    <citation type="submission" date="2005-09" db="EMBL/GenBank/DDBJ databases">
        <title>Complete sequence of chromosome 1 of Rhodobacter sphaeroides 2.4.1.</title>
        <authorList>
            <person name="Copeland A."/>
            <person name="Lucas S."/>
            <person name="Lapidus A."/>
            <person name="Barry K."/>
            <person name="Detter J.C."/>
            <person name="Glavina T."/>
            <person name="Hammon N."/>
            <person name="Israni S."/>
            <person name="Pitluck S."/>
            <person name="Richardson P."/>
            <person name="Mackenzie C."/>
            <person name="Choudhary M."/>
            <person name="Larimer F."/>
            <person name="Hauser L.J."/>
            <person name="Land M."/>
            <person name="Donohue T.J."/>
            <person name="Kaplan S."/>
        </authorList>
    </citation>
    <scope>NUCLEOTIDE SEQUENCE [LARGE SCALE GENOMIC DNA]</scope>
    <source>
        <strain>ATCC 17023 / DSM 158 / JCM 6121 / CCUG 31486 / LMG 2827 / NBRC 12203 / NCIMB 8253 / ATH 2.4.1.</strain>
    </source>
</reference>
<evidence type="ECO:0000255" key="1">
    <source>
        <dbReference type="HAMAP-Rule" id="MF_00294"/>
    </source>
</evidence>
<evidence type="ECO:0000305" key="2"/>
<sequence>MAKPTTIKIRLNSTAGTGHFYVTKKNARTMTDKMVVRKYDPVKREHVEYKEGKIK</sequence>